<sequence length="263" mass="29970">MNPNCARCGKIVYPTEKVNCLDKFWHKACFHCETCKMTLNMKNYKGYEKKPYCNAHYPKQSFTMVADTPENLRLKQQSELQSQVRYKEEFEKNKGKGFSVVADTPELQRIKKTQDQISNIKYHEEFEKSRMGPSGGEGIEPERREAQDSSSYRRPTEQQQPQPHHIPTSAPVYQQPQQQQVTPSYGGYKEPAAPVSIQRSAPGGGGKRYRAVYDYSAADEDEVSFQDGDTIVNVQQIDDGWMYGTVERTGDTGMLPANYVEAI</sequence>
<feature type="chain" id="PRO_0000075764" description="LIM and SH3 domain protein 1">
    <location>
        <begin position="1"/>
        <end position="263"/>
    </location>
</feature>
<feature type="domain" description="LIM zinc-binding" evidence="4">
    <location>
        <begin position="3"/>
        <end position="63"/>
    </location>
</feature>
<feature type="repeat" description="Nebulin 1">
    <location>
        <begin position="64"/>
        <end position="95"/>
    </location>
</feature>
<feature type="repeat" description="Nebulin 2">
    <location>
        <begin position="97"/>
        <end position="131"/>
    </location>
</feature>
<feature type="domain" description="SH3" evidence="5">
    <location>
        <begin position="204"/>
        <end position="263"/>
    </location>
</feature>
<feature type="region of interest" description="Disordered" evidence="6">
    <location>
        <begin position="122"/>
        <end position="207"/>
    </location>
</feature>
<feature type="compositionally biased region" description="Polar residues" evidence="6">
    <location>
        <begin position="148"/>
        <end position="162"/>
    </location>
</feature>
<feature type="modified residue" description="N-acetylmethionine" evidence="2">
    <location>
        <position position="1"/>
    </location>
</feature>
<feature type="modified residue" description="N6-acetyllysine" evidence="2">
    <location>
        <position position="42"/>
    </location>
</feature>
<feature type="modified residue" description="Phosphothreonine" evidence="2">
    <location>
        <position position="68"/>
    </location>
</feature>
<feature type="modified residue" description="N6-methyllysine" evidence="2">
    <location>
        <position position="75"/>
    </location>
</feature>
<feature type="modified residue" description="Phosphoserine" evidence="2">
    <location>
        <position position="99"/>
    </location>
</feature>
<feature type="modified residue" description="Phosphothreonine" evidence="11">
    <location>
        <position position="104"/>
    </location>
</feature>
<feature type="modified residue" description="N6-succinyllysine" evidence="3">
    <location>
        <position position="112"/>
    </location>
</feature>
<feature type="modified residue" description="Phosphoserine" evidence="2">
    <location>
        <position position="118"/>
    </location>
</feature>
<feature type="modified residue" description="Phosphoserine" evidence="2">
    <location>
        <position position="134"/>
    </location>
</feature>
<name>LASP1_RAT</name>
<keyword id="KW-0007">Acetylation</keyword>
<keyword id="KW-0009">Actin-binding</keyword>
<keyword id="KW-0963">Cytoplasm</keyword>
<keyword id="KW-0206">Cytoskeleton</keyword>
<keyword id="KW-0903">Direct protein sequencing</keyword>
<keyword id="KW-0406">Ion transport</keyword>
<keyword id="KW-0440">LIM domain</keyword>
<keyword id="KW-0479">Metal-binding</keyword>
<keyword id="KW-0488">Methylation</keyword>
<keyword id="KW-0597">Phosphoprotein</keyword>
<keyword id="KW-1185">Reference proteome</keyword>
<keyword id="KW-0677">Repeat</keyword>
<keyword id="KW-0728">SH3 domain</keyword>
<keyword id="KW-0813">Transport</keyword>
<keyword id="KW-0862">Zinc</keyword>
<accession>Q99MZ8</accession>
<accession>Q499R9</accession>
<gene>
    <name evidence="10" type="primary">Lasp1</name>
</gene>
<protein>
    <recommendedName>
        <fullName>LIM and SH3 domain protein 1</fullName>
        <shortName>LASP-1</shortName>
    </recommendedName>
</protein>
<dbReference type="EMBL" id="AF242187">
    <property type="protein sequence ID" value="AAK28338.1"/>
    <property type="molecule type" value="mRNA"/>
</dbReference>
<dbReference type="EMBL" id="BC099791">
    <property type="protein sequence ID" value="AAH99791.1"/>
    <property type="molecule type" value="mRNA"/>
</dbReference>
<dbReference type="RefSeq" id="NP_116002.1">
    <property type="nucleotide sequence ID" value="NM_032613.3"/>
</dbReference>
<dbReference type="RefSeq" id="XP_063124868.1">
    <property type="nucleotide sequence ID" value="XM_063268798.1"/>
</dbReference>
<dbReference type="SMR" id="Q99MZ8"/>
<dbReference type="BioGRID" id="247949">
    <property type="interactions" value="3"/>
</dbReference>
<dbReference type="FunCoup" id="Q99MZ8">
    <property type="interactions" value="2114"/>
</dbReference>
<dbReference type="IntAct" id="Q99MZ8">
    <property type="interactions" value="8"/>
</dbReference>
<dbReference type="STRING" id="10116.ENSRNOP00000005522"/>
<dbReference type="iPTMnet" id="Q99MZ8"/>
<dbReference type="PhosphoSitePlus" id="Q99MZ8"/>
<dbReference type="jPOST" id="Q99MZ8"/>
<dbReference type="PaxDb" id="10116-ENSRNOP00000005522"/>
<dbReference type="Ensembl" id="ENSRNOT00000005522.8">
    <property type="protein sequence ID" value="ENSRNOP00000005522.5"/>
    <property type="gene ID" value="ENSRNOG00000004132.8"/>
</dbReference>
<dbReference type="GeneID" id="29278"/>
<dbReference type="KEGG" id="rno:29278"/>
<dbReference type="UCSC" id="RGD:68408">
    <property type="organism name" value="rat"/>
</dbReference>
<dbReference type="AGR" id="RGD:68408"/>
<dbReference type="CTD" id="3927"/>
<dbReference type="RGD" id="68408">
    <property type="gene designation" value="Lasp1"/>
</dbReference>
<dbReference type="eggNOG" id="KOG1702">
    <property type="taxonomic scope" value="Eukaryota"/>
</dbReference>
<dbReference type="GeneTree" id="ENSGT00940000154775"/>
<dbReference type="HOGENOM" id="CLU_026811_0_1_1"/>
<dbReference type="InParanoid" id="Q99MZ8"/>
<dbReference type="OrthoDB" id="60925at9989"/>
<dbReference type="PhylomeDB" id="Q99MZ8"/>
<dbReference type="PRO" id="PR:Q99MZ8"/>
<dbReference type="Proteomes" id="UP000002494">
    <property type="component" value="Chromosome 10"/>
</dbReference>
<dbReference type="Bgee" id="ENSRNOG00000004132">
    <property type="expression patterns" value="Expressed in jejunum and 19 other cell types or tissues"/>
</dbReference>
<dbReference type="GO" id="GO:0030864">
    <property type="term" value="C:cortical actin cytoskeleton"/>
    <property type="evidence" value="ECO:0000314"/>
    <property type="project" value="UniProtKB"/>
</dbReference>
<dbReference type="GO" id="GO:0005737">
    <property type="term" value="C:cytoplasm"/>
    <property type="evidence" value="ECO:0000266"/>
    <property type="project" value="RGD"/>
</dbReference>
<dbReference type="GO" id="GO:0005925">
    <property type="term" value="C:focal adhesion"/>
    <property type="evidence" value="ECO:0000266"/>
    <property type="project" value="RGD"/>
</dbReference>
<dbReference type="GO" id="GO:0098794">
    <property type="term" value="C:postsynapse"/>
    <property type="evidence" value="ECO:0000314"/>
    <property type="project" value="SynGO"/>
</dbReference>
<dbReference type="GO" id="GO:0051015">
    <property type="term" value="F:actin filament binding"/>
    <property type="evidence" value="ECO:0000266"/>
    <property type="project" value="RGD"/>
</dbReference>
<dbReference type="GO" id="GO:0046872">
    <property type="term" value="F:metal ion binding"/>
    <property type="evidence" value="ECO:0007669"/>
    <property type="project" value="UniProtKB-KW"/>
</dbReference>
<dbReference type="GO" id="GO:0015075">
    <property type="term" value="F:monoatomic ion transmembrane transporter activity"/>
    <property type="evidence" value="ECO:0000314"/>
    <property type="project" value="UniProtKB"/>
</dbReference>
<dbReference type="GO" id="GO:0006811">
    <property type="term" value="P:monoatomic ion transport"/>
    <property type="evidence" value="ECO:0000314"/>
    <property type="project" value="UniProtKB"/>
</dbReference>
<dbReference type="CDD" id="cd09447">
    <property type="entry name" value="LIM_LASP"/>
    <property type="match status" value="1"/>
</dbReference>
<dbReference type="CDD" id="cd11934">
    <property type="entry name" value="SH3_Lasp1_C"/>
    <property type="match status" value="1"/>
</dbReference>
<dbReference type="FunFam" id="2.10.110.10:FF:000087">
    <property type="entry name" value="LIM zinc-binding domain-containing Nebulette"/>
    <property type="match status" value="1"/>
</dbReference>
<dbReference type="FunFam" id="2.30.30.40:FF:000007">
    <property type="entry name" value="nebulin isoform X1"/>
    <property type="match status" value="1"/>
</dbReference>
<dbReference type="Gene3D" id="2.10.110.10">
    <property type="entry name" value="Cysteine Rich Protein"/>
    <property type="match status" value="1"/>
</dbReference>
<dbReference type="Gene3D" id="2.30.30.40">
    <property type="entry name" value="SH3 Domains"/>
    <property type="match status" value="1"/>
</dbReference>
<dbReference type="InterPro" id="IPR035630">
    <property type="entry name" value="Lasp1_SH3"/>
</dbReference>
<dbReference type="InterPro" id="IPR051759">
    <property type="entry name" value="LIM-SH3_domain_protein"/>
</dbReference>
<dbReference type="InterPro" id="IPR000900">
    <property type="entry name" value="Nebulin_repeat"/>
</dbReference>
<dbReference type="InterPro" id="IPR036028">
    <property type="entry name" value="SH3-like_dom_sf"/>
</dbReference>
<dbReference type="InterPro" id="IPR001452">
    <property type="entry name" value="SH3_domain"/>
</dbReference>
<dbReference type="InterPro" id="IPR001781">
    <property type="entry name" value="Znf_LIM"/>
</dbReference>
<dbReference type="PANTHER" id="PTHR46218">
    <property type="entry name" value="LASP"/>
    <property type="match status" value="1"/>
</dbReference>
<dbReference type="PANTHER" id="PTHR46218:SF2">
    <property type="entry name" value="LIM AND SH3 DOMAIN PROTEIN 1"/>
    <property type="match status" value="1"/>
</dbReference>
<dbReference type="Pfam" id="PF00412">
    <property type="entry name" value="LIM"/>
    <property type="match status" value="1"/>
</dbReference>
<dbReference type="Pfam" id="PF00880">
    <property type="entry name" value="Nebulin"/>
    <property type="match status" value="2"/>
</dbReference>
<dbReference type="Pfam" id="PF14604">
    <property type="entry name" value="SH3_9"/>
    <property type="match status" value="1"/>
</dbReference>
<dbReference type="PRINTS" id="PR00452">
    <property type="entry name" value="SH3DOMAIN"/>
</dbReference>
<dbReference type="SMART" id="SM00132">
    <property type="entry name" value="LIM"/>
    <property type="match status" value="1"/>
</dbReference>
<dbReference type="SMART" id="SM00227">
    <property type="entry name" value="NEBU"/>
    <property type="match status" value="2"/>
</dbReference>
<dbReference type="SMART" id="SM00326">
    <property type="entry name" value="SH3"/>
    <property type="match status" value="1"/>
</dbReference>
<dbReference type="SUPFAM" id="SSF57716">
    <property type="entry name" value="Glucocorticoid receptor-like (DNA-binding domain)"/>
    <property type="match status" value="1"/>
</dbReference>
<dbReference type="SUPFAM" id="SSF50044">
    <property type="entry name" value="SH3-domain"/>
    <property type="match status" value="1"/>
</dbReference>
<dbReference type="PROSITE" id="PS00478">
    <property type="entry name" value="LIM_DOMAIN_1"/>
    <property type="match status" value="1"/>
</dbReference>
<dbReference type="PROSITE" id="PS50023">
    <property type="entry name" value="LIM_DOMAIN_2"/>
    <property type="match status" value="1"/>
</dbReference>
<dbReference type="PROSITE" id="PS51216">
    <property type="entry name" value="NEBULIN"/>
    <property type="match status" value="2"/>
</dbReference>
<dbReference type="PROSITE" id="PS50002">
    <property type="entry name" value="SH3"/>
    <property type="match status" value="1"/>
</dbReference>
<reference evidence="9" key="1">
    <citation type="submission" date="2000-03" db="EMBL/GenBank/DDBJ databases">
        <title>Cloning of the lasp-1 ORF from primary cultures of rat type I astrocytes.</title>
        <authorList>
            <person name="Chew C.S."/>
            <person name="Cameron P.A."/>
            <person name="Chen X."/>
            <person name="Cameron R.S."/>
        </authorList>
    </citation>
    <scope>NUCLEOTIDE SEQUENCE [MRNA]</scope>
</reference>
<reference key="2">
    <citation type="journal article" date="2004" name="Genome Res.">
        <title>The status, quality, and expansion of the NIH full-length cDNA project: the Mammalian Gene Collection (MGC).</title>
        <authorList>
            <consortium name="The MGC Project Team"/>
        </authorList>
    </citation>
    <scope>NUCLEOTIDE SEQUENCE [LARGE SCALE MRNA]</scope>
    <source>
        <tissue>Prostate</tissue>
    </source>
</reference>
<reference evidence="9" key="3">
    <citation type="submission" date="2007-04" db="UniProtKB">
        <authorList>
            <person name="Lubec G."/>
            <person name="Chen W.-Q."/>
        </authorList>
    </citation>
    <scope>PROTEIN SEQUENCE OF 11-17; 97-109 AND 131-144</scope>
    <scope>IDENTIFICATION BY MASS SPECTROMETRY</scope>
    <source>
        <strain>Sprague-Dawley</strain>
        <tissue>Hippocampus</tissue>
    </source>
</reference>
<reference evidence="8" key="4">
    <citation type="journal article" date="2000" name="J. Cell Sci.">
        <title>The LIM and SH3 domain-containing protein, lasp-1, may link the cAMP signaling pathway with dynamic membrane restructuring activities in ion transporting epithelia.</title>
        <authorList>
            <person name="Chew C.S."/>
            <person name="Parente J.A. Jr."/>
            <person name="Chen X."/>
            <person name="Chaponnier C."/>
            <person name="Cameron R.S."/>
        </authorList>
    </citation>
    <scope>FUNCTION</scope>
    <scope>INTERACTION WITH F-ACTIN</scope>
    <scope>SUBCELLULAR LOCATION</scope>
    <scope>TISSUE SPECIFICITY</scope>
    <scope>PHOSPHORYLATION</scope>
</reference>
<reference key="5">
    <citation type="journal article" date="2012" name="Nat. Commun.">
        <title>Quantitative maps of protein phosphorylation sites across 14 different rat organs and tissues.</title>
        <authorList>
            <person name="Lundby A."/>
            <person name="Secher A."/>
            <person name="Lage K."/>
            <person name="Nordsborg N.B."/>
            <person name="Dmytriyev A."/>
            <person name="Lundby C."/>
            <person name="Olsen J.V."/>
        </authorList>
    </citation>
    <scope>PHOSPHORYLATION [LARGE SCALE ANALYSIS] AT THR-104</scope>
    <scope>IDENTIFICATION BY MASS SPECTROMETRY [LARGE SCALE ANALYSIS]</scope>
</reference>
<evidence type="ECO:0000250" key="1"/>
<evidence type="ECO:0000250" key="2">
    <source>
        <dbReference type="UniProtKB" id="Q14847"/>
    </source>
</evidence>
<evidence type="ECO:0000250" key="3">
    <source>
        <dbReference type="UniProtKB" id="Q61792"/>
    </source>
</evidence>
<evidence type="ECO:0000255" key="4">
    <source>
        <dbReference type="PROSITE-ProRule" id="PRU00125"/>
    </source>
</evidence>
<evidence type="ECO:0000255" key="5">
    <source>
        <dbReference type="PROSITE-ProRule" id="PRU00192"/>
    </source>
</evidence>
<evidence type="ECO:0000256" key="6">
    <source>
        <dbReference type="SAM" id="MobiDB-lite"/>
    </source>
</evidence>
<evidence type="ECO:0000269" key="7">
    <source>
    </source>
</evidence>
<evidence type="ECO:0000305" key="8"/>
<evidence type="ECO:0000312" key="9">
    <source>
        <dbReference type="EMBL" id="AAK28338.1"/>
    </source>
</evidence>
<evidence type="ECO:0000312" key="10">
    <source>
        <dbReference type="RGD" id="68408"/>
    </source>
</evidence>
<evidence type="ECO:0007744" key="11">
    <source>
    </source>
</evidence>
<organism>
    <name type="scientific">Rattus norvegicus</name>
    <name type="common">Rat</name>
    <dbReference type="NCBI Taxonomy" id="10116"/>
    <lineage>
        <taxon>Eukaryota</taxon>
        <taxon>Metazoa</taxon>
        <taxon>Chordata</taxon>
        <taxon>Craniata</taxon>
        <taxon>Vertebrata</taxon>
        <taxon>Euteleostomi</taxon>
        <taxon>Mammalia</taxon>
        <taxon>Eutheria</taxon>
        <taxon>Euarchontoglires</taxon>
        <taxon>Glires</taxon>
        <taxon>Rodentia</taxon>
        <taxon>Myomorpha</taxon>
        <taxon>Muroidea</taxon>
        <taxon>Muridae</taxon>
        <taxon>Murinae</taxon>
        <taxon>Rattus</taxon>
    </lineage>
</organism>
<proteinExistence type="evidence at protein level"/>
<comment type="function">
    <text evidence="7">Plays an important role in the regulation of dynamic actin-based, cytoskeletal activities. Agonist-dependent changes in LASP1 phosphorylation may also serve to regulate actin-associated ion transport activities, not only in the parietal cell but also in certain other F-actin-rich secretory epithelial cell types.</text>
</comment>
<comment type="subunit">
    <text evidence="1">Interacts with F-actin. Interacts with ANKRD54. Interacts with KBTBD10 (By similarity).</text>
</comment>
<comment type="subcellular location">
    <subcellularLocation>
        <location evidence="7">Cytoplasm</location>
        <location evidence="7">Cell cortex</location>
    </subcellularLocation>
    <subcellularLocation>
        <location evidence="7">Cytoplasm</location>
        <location evidence="7">Cytoskeleton</location>
    </subcellularLocation>
    <text>Associated with the F-actin rich cortical cytoskeleton.</text>
</comment>
<comment type="tissue specificity">
    <text evidence="7">Expressed in a wide range of tissues (but not the heart or skeletal muscle), the expression is specific for certain actin-rich cell types within these tissues. Expression is prominent in the cortical regions of ion-transporting duct cells in the pancreas, in the salivary parotid gland and in certain F-actin-rich cells in the distal tubule/collecting duct. In primary cultures of gastric fibroblasts, expression is mainly within the tips of lamellipodia and at the leading edges of membrane ruffles.</text>
</comment>
<comment type="PTM">
    <text evidence="7">Phosphorylated.</text>
</comment>